<accession>Q3MAB1</accession>
<dbReference type="EC" id="1.10.3.9" evidence="1"/>
<dbReference type="EMBL" id="CP000117">
    <property type="protein sequence ID" value="ABA21220.1"/>
    <property type="molecule type" value="Genomic_DNA"/>
</dbReference>
<dbReference type="EMBL" id="CP000117">
    <property type="protein sequence ID" value="ABA22075.1"/>
    <property type="molecule type" value="Genomic_DNA"/>
</dbReference>
<dbReference type="EMBL" id="CP000117">
    <property type="protein sequence ID" value="ABA23159.1"/>
    <property type="molecule type" value="Genomic_DNA"/>
</dbReference>
<dbReference type="SMR" id="Q3MAB1"/>
<dbReference type="STRING" id="240292.Ava_1597"/>
<dbReference type="KEGG" id="ava:Ava_1597"/>
<dbReference type="KEGG" id="ava:Ava_2460"/>
<dbReference type="KEGG" id="ava:Ava_3553"/>
<dbReference type="eggNOG" id="ENOG502Z87P">
    <property type="taxonomic scope" value="Bacteria"/>
</dbReference>
<dbReference type="HOGENOM" id="CLU_054206_1_0_3"/>
<dbReference type="Proteomes" id="UP000002533">
    <property type="component" value="Chromosome"/>
</dbReference>
<dbReference type="GO" id="GO:0009523">
    <property type="term" value="C:photosystem II"/>
    <property type="evidence" value="ECO:0007669"/>
    <property type="project" value="UniProtKB-KW"/>
</dbReference>
<dbReference type="GO" id="GO:0031676">
    <property type="term" value="C:plasma membrane-derived thylakoid membrane"/>
    <property type="evidence" value="ECO:0007669"/>
    <property type="project" value="UniProtKB-SubCell"/>
</dbReference>
<dbReference type="GO" id="GO:0016168">
    <property type="term" value="F:chlorophyll binding"/>
    <property type="evidence" value="ECO:0007669"/>
    <property type="project" value="UniProtKB-UniRule"/>
</dbReference>
<dbReference type="GO" id="GO:0045156">
    <property type="term" value="F:electron transporter, transferring electrons within the cyclic electron transport pathway of photosynthesis activity"/>
    <property type="evidence" value="ECO:0007669"/>
    <property type="project" value="InterPro"/>
</dbReference>
<dbReference type="GO" id="GO:0005506">
    <property type="term" value="F:iron ion binding"/>
    <property type="evidence" value="ECO:0007669"/>
    <property type="project" value="UniProtKB-UniRule"/>
</dbReference>
<dbReference type="GO" id="GO:0016682">
    <property type="term" value="F:oxidoreductase activity, acting on diphenols and related substances as donors, oxygen as acceptor"/>
    <property type="evidence" value="ECO:0007669"/>
    <property type="project" value="UniProtKB-UniRule"/>
</dbReference>
<dbReference type="GO" id="GO:0010242">
    <property type="term" value="F:oxygen evolving activity"/>
    <property type="evidence" value="ECO:0007669"/>
    <property type="project" value="UniProtKB-EC"/>
</dbReference>
<dbReference type="GO" id="GO:0009772">
    <property type="term" value="P:photosynthetic electron transport in photosystem II"/>
    <property type="evidence" value="ECO:0007669"/>
    <property type="project" value="InterPro"/>
</dbReference>
<dbReference type="GO" id="GO:0009635">
    <property type="term" value="P:response to herbicide"/>
    <property type="evidence" value="ECO:0007669"/>
    <property type="project" value="UniProtKB-KW"/>
</dbReference>
<dbReference type="CDD" id="cd09289">
    <property type="entry name" value="Photosystem-II_D1"/>
    <property type="match status" value="1"/>
</dbReference>
<dbReference type="FunFam" id="1.20.85.10:FF:000002">
    <property type="entry name" value="Photosystem II protein D1"/>
    <property type="match status" value="1"/>
</dbReference>
<dbReference type="Gene3D" id="1.20.85.10">
    <property type="entry name" value="Photosystem II protein D1-like"/>
    <property type="match status" value="1"/>
</dbReference>
<dbReference type="HAMAP" id="MF_01379">
    <property type="entry name" value="PSII_PsbA_D1"/>
    <property type="match status" value="1"/>
</dbReference>
<dbReference type="InterPro" id="IPR055266">
    <property type="entry name" value="D1/D2"/>
</dbReference>
<dbReference type="InterPro" id="IPR036854">
    <property type="entry name" value="Photo_II_D1/D2_sf"/>
</dbReference>
<dbReference type="InterPro" id="IPR000484">
    <property type="entry name" value="Photo_RC_L/M"/>
</dbReference>
<dbReference type="InterPro" id="IPR055265">
    <property type="entry name" value="Photo_RC_L/M_CS"/>
</dbReference>
<dbReference type="InterPro" id="IPR005867">
    <property type="entry name" value="PSII_D1"/>
</dbReference>
<dbReference type="NCBIfam" id="TIGR01151">
    <property type="entry name" value="psbA"/>
    <property type="match status" value="1"/>
</dbReference>
<dbReference type="PANTHER" id="PTHR33149:SF12">
    <property type="entry name" value="PHOTOSYSTEM II D2 PROTEIN"/>
    <property type="match status" value="1"/>
</dbReference>
<dbReference type="PANTHER" id="PTHR33149">
    <property type="entry name" value="PHOTOSYSTEM II PROTEIN D1"/>
    <property type="match status" value="1"/>
</dbReference>
<dbReference type="Pfam" id="PF00124">
    <property type="entry name" value="Photo_RC"/>
    <property type="match status" value="1"/>
</dbReference>
<dbReference type="PRINTS" id="PR00256">
    <property type="entry name" value="REACTNCENTRE"/>
</dbReference>
<dbReference type="SUPFAM" id="SSF81483">
    <property type="entry name" value="Bacterial photosystem II reaction centre, L and M subunits"/>
    <property type="match status" value="1"/>
</dbReference>
<dbReference type="PROSITE" id="PS00244">
    <property type="entry name" value="REACTION_CENTER"/>
    <property type="match status" value="1"/>
</dbReference>
<gene>
    <name evidence="1 2" type="primary">psbA2</name>
    <name type="ordered locus">Ava_1597</name>
</gene>
<gene>
    <name evidence="1 2" type="primary">psbA4</name>
    <name type="ordered locus">Ava_2460</name>
</gene>
<gene>
    <name evidence="1 2" type="primary">psbA5</name>
    <name type="ordered locus">Ava_3553</name>
</gene>
<keyword id="KW-0106">Calcium</keyword>
<keyword id="KW-0148">Chlorophyll</keyword>
<keyword id="KW-0157">Chromophore</keyword>
<keyword id="KW-0249">Electron transport</keyword>
<keyword id="KW-0359">Herbicide resistance</keyword>
<keyword id="KW-0408">Iron</keyword>
<keyword id="KW-0460">Magnesium</keyword>
<keyword id="KW-0464">Manganese</keyword>
<keyword id="KW-0472">Membrane</keyword>
<keyword id="KW-0479">Metal-binding</keyword>
<keyword id="KW-0560">Oxidoreductase</keyword>
<keyword id="KW-0602">Photosynthesis</keyword>
<keyword id="KW-0604">Photosystem II</keyword>
<keyword id="KW-0793">Thylakoid</keyword>
<keyword id="KW-0812">Transmembrane</keyword>
<keyword id="KW-1133">Transmembrane helix</keyword>
<keyword id="KW-0813">Transport</keyword>
<evidence type="ECO:0000255" key="1">
    <source>
        <dbReference type="HAMAP-Rule" id="MF_01379"/>
    </source>
</evidence>
<evidence type="ECO:0000305" key="2"/>
<comment type="function">
    <text evidence="1">Photosystem II (PSII) is a light-driven water:plastoquinone oxidoreductase that uses light energy to abstract electrons from H(2)O, generating O(2) and a proton gradient subsequently used for ATP formation. It consists of a core antenna complex that captures photons, and an electron transfer chain that converts photonic excitation into a charge separation. The D1/D2 (PsbA/PsbD) reaction center heterodimer binds P680, the primary electron donor of PSII as well as several subsequent electron acceptors.</text>
</comment>
<comment type="catalytic activity">
    <reaction evidence="1">
        <text>2 a plastoquinone + 4 hnu + 2 H2O = 2 a plastoquinol + O2</text>
        <dbReference type="Rhea" id="RHEA:36359"/>
        <dbReference type="Rhea" id="RHEA-COMP:9561"/>
        <dbReference type="Rhea" id="RHEA-COMP:9562"/>
        <dbReference type="ChEBI" id="CHEBI:15377"/>
        <dbReference type="ChEBI" id="CHEBI:15379"/>
        <dbReference type="ChEBI" id="CHEBI:17757"/>
        <dbReference type="ChEBI" id="CHEBI:30212"/>
        <dbReference type="ChEBI" id="CHEBI:62192"/>
        <dbReference type="EC" id="1.10.3.9"/>
    </reaction>
</comment>
<comment type="cofactor">
    <text evidence="1">The D1/D2 heterodimer binds P680, chlorophylls that are the primary electron donor of PSII, and subsequent electron acceptors. It shares a non-heme iron and each subunit binds pheophytin, quinone, additional chlorophylls, carotenoids and lipids. D1 provides most of the ligands for the Mn4-Ca-O5 cluster of the oxygen-evolving complex (OEC). There is also a Cl(-1) ion associated with D1 and D2, which is required for oxygen evolution. The PSII complex binds additional chlorophylls, carotenoids and specific lipids.</text>
</comment>
<comment type="subunit">
    <text evidence="1">PSII is composed of 1 copy each of membrane proteins PsbA, PsbB, PsbC, PsbD, PsbE, PsbF, PsbH, PsbI, PsbJ, PsbK, PsbL, PsbM, PsbT, PsbX, PsbY, PsbZ, Psb30/Ycf12, peripheral proteins PsbO, CyanoQ (PsbQ), PsbU, PsbV and a large number of cofactors. It forms dimeric complexes.</text>
</comment>
<comment type="subcellular location">
    <subcellularLocation>
        <location evidence="1">Cellular thylakoid membrane</location>
        <topology evidence="1">Multi-pass membrane protein</topology>
    </subcellularLocation>
</comment>
<comment type="PTM">
    <text evidence="1">Tyr-161 forms a radical intermediate that is referred to as redox-active TyrZ, YZ or Y-Z.</text>
</comment>
<comment type="PTM">
    <text evidence="1">C-terminally processed by CtpA; processing is essential to allow assembly of the oxygen-evolving complex and thus photosynthetic growth.</text>
</comment>
<comment type="miscellaneous">
    <text evidence="1">Cyanobacteria usually contain more than 2 copies of the psbA gene.</text>
</comment>
<comment type="miscellaneous">
    <text evidence="1">2 of the reaction center chlorophylls (ChlD1 and ChlD2) are entirely coordinated by water.</text>
</comment>
<comment type="miscellaneous">
    <text evidence="1">Herbicides such as atrazine, BNT, diuron or ioxynil bind in the Q(B) binding site and block subsequent electron transfer.</text>
</comment>
<comment type="similarity">
    <text evidence="1">Belongs to the reaction center PufL/M/PsbA/D family.</text>
</comment>
<reference key="1">
    <citation type="journal article" date="2014" name="Stand. Genomic Sci.">
        <title>Complete genome sequence of Anabaena variabilis ATCC 29413.</title>
        <authorList>
            <person name="Thiel T."/>
            <person name="Pratte B.S."/>
            <person name="Zhong J."/>
            <person name="Goodwin L."/>
            <person name="Copeland A."/>
            <person name="Lucas S."/>
            <person name="Han C."/>
            <person name="Pitluck S."/>
            <person name="Land M.L."/>
            <person name="Kyrpides N.C."/>
            <person name="Woyke T."/>
        </authorList>
    </citation>
    <scope>NUCLEOTIDE SEQUENCE [LARGE SCALE GENOMIC DNA]</scope>
    <source>
        <strain>ATCC 29413 / PCC 7937</strain>
    </source>
</reference>
<organism>
    <name type="scientific">Trichormus variabilis (strain ATCC 29413 / PCC 7937)</name>
    <name type="common">Anabaena variabilis</name>
    <dbReference type="NCBI Taxonomy" id="240292"/>
    <lineage>
        <taxon>Bacteria</taxon>
        <taxon>Bacillati</taxon>
        <taxon>Cyanobacteriota</taxon>
        <taxon>Cyanophyceae</taxon>
        <taxon>Nostocales</taxon>
        <taxon>Nostocaceae</taxon>
        <taxon>Trichormus</taxon>
    </lineage>
</organism>
<protein>
    <recommendedName>
        <fullName evidence="1">Photosystem II protein D1 2</fullName>
        <shortName evidence="1">PSII D1 protein 2</shortName>
        <ecNumber evidence="1">1.10.3.9</ecNumber>
    </recommendedName>
    <alternativeName>
        <fullName evidence="1">Photosystem II Q(B) protein 2</fullName>
    </alternativeName>
</protein>
<proteinExistence type="inferred from homology"/>
<name>PSBA2_TRIV2</name>
<feature type="chain" id="PRO_0000316338" description="Photosystem II protein D1 2">
    <location>
        <begin position="1"/>
        <end position="344"/>
    </location>
</feature>
<feature type="propeptide" id="PRO_0000316339" evidence="1">
    <location>
        <begin position="345"/>
        <end position="360"/>
    </location>
</feature>
<feature type="transmembrane region" description="Helical" evidence="1">
    <location>
        <begin position="29"/>
        <end position="46"/>
    </location>
</feature>
<feature type="transmembrane region" description="Helical" evidence="1">
    <location>
        <begin position="118"/>
        <end position="133"/>
    </location>
</feature>
<feature type="transmembrane region" description="Helical" evidence="1">
    <location>
        <begin position="142"/>
        <end position="156"/>
    </location>
</feature>
<feature type="transmembrane region" description="Helical" evidence="1">
    <location>
        <begin position="197"/>
        <end position="218"/>
    </location>
</feature>
<feature type="transmembrane region" description="Helical" evidence="1">
    <location>
        <begin position="274"/>
        <end position="288"/>
    </location>
</feature>
<feature type="binding site" description="axial binding residue" evidence="1">
    <location>
        <position position="118"/>
    </location>
    <ligand>
        <name>chlorophyll a</name>
        <dbReference type="ChEBI" id="CHEBI:58416"/>
        <label>ChlzD1</label>
    </ligand>
    <ligandPart>
        <name>Mg</name>
        <dbReference type="ChEBI" id="CHEBI:25107"/>
    </ligandPart>
</feature>
<feature type="binding site" evidence="1">
    <location>
        <position position="126"/>
    </location>
    <ligand>
        <name>pheophytin a</name>
        <dbReference type="ChEBI" id="CHEBI:136840"/>
        <label>D1</label>
    </ligand>
</feature>
<feature type="binding site" evidence="1">
    <location>
        <position position="170"/>
    </location>
    <ligand>
        <name>[CaMn4O5] cluster</name>
        <dbReference type="ChEBI" id="CHEBI:189552"/>
    </ligand>
</feature>
<feature type="binding site" evidence="1">
    <location>
        <position position="189"/>
    </location>
    <ligand>
        <name>[CaMn4O5] cluster</name>
        <dbReference type="ChEBI" id="CHEBI:189552"/>
    </ligand>
</feature>
<feature type="binding site" description="axial binding residue" evidence="1">
    <location>
        <position position="198"/>
    </location>
    <ligand>
        <name>chlorophyll a</name>
        <dbReference type="ChEBI" id="CHEBI:58416"/>
        <label>PD1</label>
    </ligand>
    <ligandPart>
        <name>Mg</name>
        <dbReference type="ChEBI" id="CHEBI:25107"/>
    </ligandPart>
</feature>
<feature type="binding site" evidence="1">
    <location>
        <position position="215"/>
    </location>
    <ligand>
        <name>a quinone</name>
        <dbReference type="ChEBI" id="CHEBI:132124"/>
        <label>B</label>
    </ligand>
</feature>
<feature type="binding site" evidence="1">
    <location>
        <position position="215"/>
    </location>
    <ligand>
        <name>Fe cation</name>
        <dbReference type="ChEBI" id="CHEBI:24875"/>
        <note>ligand shared with heterodimeric partner</note>
    </ligand>
</feature>
<feature type="binding site" evidence="1">
    <location>
        <begin position="264"/>
        <end position="265"/>
    </location>
    <ligand>
        <name>a quinone</name>
        <dbReference type="ChEBI" id="CHEBI:132124"/>
        <label>B</label>
    </ligand>
</feature>
<feature type="binding site" evidence="1">
    <location>
        <position position="272"/>
    </location>
    <ligand>
        <name>Fe cation</name>
        <dbReference type="ChEBI" id="CHEBI:24875"/>
        <note>ligand shared with heterodimeric partner</note>
    </ligand>
</feature>
<feature type="binding site" evidence="1">
    <location>
        <position position="332"/>
    </location>
    <ligand>
        <name>[CaMn4O5] cluster</name>
        <dbReference type="ChEBI" id="CHEBI:189552"/>
    </ligand>
</feature>
<feature type="binding site" evidence="1">
    <location>
        <position position="333"/>
    </location>
    <ligand>
        <name>[CaMn4O5] cluster</name>
        <dbReference type="ChEBI" id="CHEBI:189552"/>
    </ligand>
</feature>
<feature type="binding site" evidence="1">
    <location>
        <position position="342"/>
    </location>
    <ligand>
        <name>[CaMn4O5] cluster</name>
        <dbReference type="ChEBI" id="CHEBI:189552"/>
    </ligand>
</feature>
<feature type="binding site" evidence="1">
    <location>
        <position position="344"/>
    </location>
    <ligand>
        <name>[CaMn4O5] cluster</name>
        <dbReference type="ChEBI" id="CHEBI:189552"/>
    </ligand>
</feature>
<feature type="site" description="Tyrosine radical intermediate" evidence="1">
    <location>
        <position position="161"/>
    </location>
</feature>
<feature type="site" description="Stabilizes free radical intermediate" evidence="1">
    <location>
        <position position="190"/>
    </location>
</feature>
<feature type="site" description="Cleavage; by CtpA" evidence="1">
    <location>
        <begin position="344"/>
        <end position="345"/>
    </location>
</feature>
<sequence>MTATLQQRKSANVWEQFCEWITSTNNRLYIGWFGVLMIPTLLAATTCFIIAFIAAPPVDIDGIREPVAGSLIYGNNIISGAVVPSSNAIGLHFYPIWEAASLDEWLYNGGPYQLVIFHFLTGVFCYLGREWELSYRLGMRPWICLAFSAPVAAATAVFLIYPIGQGSFSDGMPLGISGTFNFMIVFQAEHNILMHPFHMLGVAGVFGGSLFSAMHGSLVTSSLVRETTENESQNYGYKFGQEEETYNIVAAHGYFGRLIFQYASFNNSRQLHFFLAAWPVIGIWFTALGVSTMAFNLNGFNFNQSIIDSQGRVINTWADIINRANLGMEVMHERNAHNFPLDLAAGEVAPVALTAPAING</sequence>